<reference key="1">
    <citation type="journal article" date="2004" name="Proc. Natl. Acad. Sci. U.S.A.">
        <title>Genomic analysis of Bacteroides fragilis reveals extensive DNA inversions regulating cell surface adaptation.</title>
        <authorList>
            <person name="Kuwahara T."/>
            <person name="Yamashita A."/>
            <person name="Hirakawa H."/>
            <person name="Nakayama H."/>
            <person name="Toh H."/>
            <person name="Okada N."/>
            <person name="Kuhara S."/>
            <person name="Hattori M."/>
            <person name="Hayashi T."/>
            <person name="Ohnishi Y."/>
        </authorList>
    </citation>
    <scope>NUCLEOTIDE SEQUENCE [LARGE SCALE GENOMIC DNA]</scope>
    <source>
        <strain>YCH46</strain>
    </source>
</reference>
<feature type="chain" id="PRO_0000362626" description="NADH-quinone oxidoreductase subunit A">
    <location>
        <begin position="1"/>
        <end position="116"/>
    </location>
</feature>
<feature type="transmembrane region" description="Helical" evidence="1">
    <location>
        <begin position="3"/>
        <end position="23"/>
    </location>
</feature>
<feature type="transmembrane region" description="Helical" evidence="1">
    <location>
        <begin position="61"/>
        <end position="81"/>
    </location>
</feature>
<feature type="transmembrane region" description="Helical" evidence="1">
    <location>
        <begin position="88"/>
        <end position="108"/>
    </location>
</feature>
<name>NUOA_BACFR</name>
<comment type="function">
    <text evidence="1">NDH-1 shuttles electrons from NADH, via FMN and iron-sulfur (Fe-S) centers, to quinones in the respiratory chain. The immediate electron acceptor for the enzyme in this species is believed to be a menaquinone. Couples the redox reaction to proton translocation (for every two electrons transferred, four hydrogen ions are translocated across the cytoplasmic membrane), and thus conserves the redox energy in a proton gradient.</text>
</comment>
<comment type="catalytic activity">
    <reaction evidence="1">
        <text>a quinone + NADH + 5 H(+)(in) = a quinol + NAD(+) + 4 H(+)(out)</text>
        <dbReference type="Rhea" id="RHEA:57888"/>
        <dbReference type="ChEBI" id="CHEBI:15378"/>
        <dbReference type="ChEBI" id="CHEBI:24646"/>
        <dbReference type="ChEBI" id="CHEBI:57540"/>
        <dbReference type="ChEBI" id="CHEBI:57945"/>
        <dbReference type="ChEBI" id="CHEBI:132124"/>
    </reaction>
</comment>
<comment type="subunit">
    <text evidence="1">NDH-1 is composed of 14 different subunits. Subunits NuoA, H, J, K, L, M, N constitute the membrane sector of the complex.</text>
</comment>
<comment type="subcellular location">
    <subcellularLocation>
        <location evidence="1">Cell inner membrane</location>
        <topology evidence="1">Multi-pass membrane protein</topology>
    </subcellularLocation>
</comment>
<comment type="similarity">
    <text evidence="1">Belongs to the complex I subunit 3 family.</text>
</comment>
<protein>
    <recommendedName>
        <fullName evidence="1">NADH-quinone oxidoreductase subunit A</fullName>
        <ecNumber evidence="1">7.1.1.-</ecNumber>
    </recommendedName>
    <alternativeName>
        <fullName evidence="1">NADH dehydrogenase I subunit A</fullName>
    </alternativeName>
    <alternativeName>
        <fullName evidence="1">NDH-1 subunit A</fullName>
    </alternativeName>
    <alternativeName>
        <fullName evidence="1">NUO1</fullName>
    </alternativeName>
</protein>
<dbReference type="EC" id="7.1.1.-" evidence="1"/>
<dbReference type="EMBL" id="AP006841">
    <property type="protein sequence ID" value="BAD47620.1"/>
    <property type="molecule type" value="Genomic_DNA"/>
</dbReference>
<dbReference type="RefSeq" id="WP_005775585.1">
    <property type="nucleotide sequence ID" value="NZ_UYXF01000001.1"/>
</dbReference>
<dbReference type="RefSeq" id="YP_098154.1">
    <property type="nucleotide sequence ID" value="NC_006347.1"/>
</dbReference>
<dbReference type="SMR" id="Q64Y06"/>
<dbReference type="STRING" id="295405.BF0869"/>
<dbReference type="KEGG" id="bfr:BF0869"/>
<dbReference type="PATRIC" id="fig|295405.11.peg.875"/>
<dbReference type="HOGENOM" id="CLU_119549_1_2_10"/>
<dbReference type="OrthoDB" id="9791970at2"/>
<dbReference type="Proteomes" id="UP000002197">
    <property type="component" value="Chromosome"/>
</dbReference>
<dbReference type="GO" id="GO:0030964">
    <property type="term" value="C:NADH dehydrogenase complex"/>
    <property type="evidence" value="ECO:0007669"/>
    <property type="project" value="TreeGrafter"/>
</dbReference>
<dbReference type="GO" id="GO:0005886">
    <property type="term" value="C:plasma membrane"/>
    <property type="evidence" value="ECO:0007669"/>
    <property type="project" value="UniProtKB-SubCell"/>
</dbReference>
<dbReference type="GO" id="GO:0008137">
    <property type="term" value="F:NADH dehydrogenase (ubiquinone) activity"/>
    <property type="evidence" value="ECO:0007669"/>
    <property type="project" value="InterPro"/>
</dbReference>
<dbReference type="GO" id="GO:0050136">
    <property type="term" value="F:NADH:ubiquinone reductase (non-electrogenic) activity"/>
    <property type="evidence" value="ECO:0007669"/>
    <property type="project" value="UniProtKB-UniRule"/>
</dbReference>
<dbReference type="GO" id="GO:0048038">
    <property type="term" value="F:quinone binding"/>
    <property type="evidence" value="ECO:0007669"/>
    <property type="project" value="UniProtKB-KW"/>
</dbReference>
<dbReference type="FunFam" id="1.20.58.1610:FF:000008">
    <property type="entry name" value="NADH-quinone oxidoreductase subunit A"/>
    <property type="match status" value="1"/>
</dbReference>
<dbReference type="Gene3D" id="1.20.58.1610">
    <property type="entry name" value="NADH:ubiquinone/plastoquinone oxidoreductase, chain 3"/>
    <property type="match status" value="1"/>
</dbReference>
<dbReference type="HAMAP" id="MF_01394">
    <property type="entry name" value="NDH1_NuoA"/>
    <property type="match status" value="1"/>
</dbReference>
<dbReference type="InterPro" id="IPR023043">
    <property type="entry name" value="NAD(P)H_OxRDtase_bac/plastid"/>
</dbReference>
<dbReference type="InterPro" id="IPR000440">
    <property type="entry name" value="NADH_UbQ/plastoQ_OxRdtase_su3"/>
</dbReference>
<dbReference type="InterPro" id="IPR038430">
    <property type="entry name" value="NDAH_ubi_oxred_su3_sf"/>
</dbReference>
<dbReference type="PANTHER" id="PTHR11058:SF22">
    <property type="entry name" value="NADH-QUINONE OXIDOREDUCTASE SUBUNIT A"/>
    <property type="match status" value="1"/>
</dbReference>
<dbReference type="PANTHER" id="PTHR11058">
    <property type="entry name" value="NADH-UBIQUINONE OXIDOREDUCTASE CHAIN 3"/>
    <property type="match status" value="1"/>
</dbReference>
<dbReference type="Pfam" id="PF00507">
    <property type="entry name" value="Oxidored_q4"/>
    <property type="match status" value="1"/>
</dbReference>
<accession>Q64Y06</accession>
<keyword id="KW-0997">Cell inner membrane</keyword>
<keyword id="KW-1003">Cell membrane</keyword>
<keyword id="KW-0472">Membrane</keyword>
<keyword id="KW-0520">NAD</keyword>
<keyword id="KW-0874">Quinone</keyword>
<keyword id="KW-1278">Translocase</keyword>
<keyword id="KW-0812">Transmembrane</keyword>
<keyword id="KW-1133">Transmembrane helix</keyword>
<keyword id="KW-0813">Transport</keyword>
<proteinExistence type="inferred from homology"/>
<evidence type="ECO:0000255" key="1">
    <source>
        <dbReference type="HAMAP-Rule" id="MF_01394"/>
    </source>
</evidence>
<gene>
    <name evidence="1" type="primary">nuoA</name>
    <name type="ordered locus">BF0869</name>
</gene>
<sequence>MNFTLLVVVLLTAIAFVGVVIALSNAISPRSYNAQKFEAYECGIPTRGKSWMQFRVGYYLFAILFLMFDVETVFLFPWAVIARDLGPQGLISILFFLVVLVLGLAYAWKKGALEWK</sequence>
<organism>
    <name type="scientific">Bacteroides fragilis (strain YCH46)</name>
    <dbReference type="NCBI Taxonomy" id="295405"/>
    <lineage>
        <taxon>Bacteria</taxon>
        <taxon>Pseudomonadati</taxon>
        <taxon>Bacteroidota</taxon>
        <taxon>Bacteroidia</taxon>
        <taxon>Bacteroidales</taxon>
        <taxon>Bacteroidaceae</taxon>
        <taxon>Bacteroides</taxon>
    </lineage>
</organism>